<proteinExistence type="inferred from homology"/>
<evidence type="ECO:0000255" key="1">
    <source>
        <dbReference type="HAMAP-Rule" id="MF_00528"/>
    </source>
</evidence>
<dbReference type="EC" id="3.6.1.9" evidence="1"/>
<dbReference type="EMBL" id="CP000377">
    <property type="protein sequence ID" value="ABF65593.1"/>
    <property type="molecule type" value="Genomic_DNA"/>
</dbReference>
<dbReference type="RefSeq" id="WP_011540174.1">
    <property type="nucleotide sequence ID" value="NC_008044.1"/>
</dbReference>
<dbReference type="SMR" id="Q1GCM3"/>
<dbReference type="STRING" id="292414.TM1040_2861"/>
<dbReference type="KEGG" id="sit:TM1040_2861"/>
<dbReference type="eggNOG" id="COG0424">
    <property type="taxonomic scope" value="Bacteria"/>
</dbReference>
<dbReference type="HOGENOM" id="CLU_040416_1_2_5"/>
<dbReference type="OrthoDB" id="9813962at2"/>
<dbReference type="Proteomes" id="UP000000636">
    <property type="component" value="Chromosome"/>
</dbReference>
<dbReference type="GO" id="GO:0005737">
    <property type="term" value="C:cytoplasm"/>
    <property type="evidence" value="ECO:0007669"/>
    <property type="project" value="UniProtKB-SubCell"/>
</dbReference>
<dbReference type="GO" id="GO:0047429">
    <property type="term" value="F:nucleoside triphosphate diphosphatase activity"/>
    <property type="evidence" value="ECO:0007669"/>
    <property type="project" value="UniProtKB-EC"/>
</dbReference>
<dbReference type="GO" id="GO:0009117">
    <property type="term" value="P:nucleotide metabolic process"/>
    <property type="evidence" value="ECO:0007669"/>
    <property type="project" value="UniProtKB-KW"/>
</dbReference>
<dbReference type="CDD" id="cd00555">
    <property type="entry name" value="Maf"/>
    <property type="match status" value="1"/>
</dbReference>
<dbReference type="Gene3D" id="3.90.950.10">
    <property type="match status" value="1"/>
</dbReference>
<dbReference type="HAMAP" id="MF_00528">
    <property type="entry name" value="Maf"/>
    <property type="match status" value="1"/>
</dbReference>
<dbReference type="InterPro" id="IPR029001">
    <property type="entry name" value="ITPase-like_fam"/>
</dbReference>
<dbReference type="InterPro" id="IPR003697">
    <property type="entry name" value="Maf-like"/>
</dbReference>
<dbReference type="NCBIfam" id="TIGR00172">
    <property type="entry name" value="maf"/>
    <property type="match status" value="1"/>
</dbReference>
<dbReference type="PANTHER" id="PTHR43213">
    <property type="entry name" value="BIFUNCTIONAL DTTP/UTP PYROPHOSPHATASE/METHYLTRANSFERASE PROTEIN-RELATED"/>
    <property type="match status" value="1"/>
</dbReference>
<dbReference type="PANTHER" id="PTHR43213:SF5">
    <property type="entry name" value="BIFUNCTIONAL DTTP_UTP PYROPHOSPHATASE_METHYLTRANSFERASE PROTEIN-RELATED"/>
    <property type="match status" value="1"/>
</dbReference>
<dbReference type="Pfam" id="PF02545">
    <property type="entry name" value="Maf"/>
    <property type="match status" value="1"/>
</dbReference>
<dbReference type="PIRSF" id="PIRSF006305">
    <property type="entry name" value="Maf"/>
    <property type="match status" value="1"/>
</dbReference>
<dbReference type="SUPFAM" id="SSF52972">
    <property type="entry name" value="ITPase-like"/>
    <property type="match status" value="1"/>
</dbReference>
<reference key="1">
    <citation type="submission" date="2006-05" db="EMBL/GenBank/DDBJ databases">
        <title>Complete sequence of chromosome of Silicibacter sp. TM1040.</title>
        <authorList>
            <consortium name="US DOE Joint Genome Institute"/>
            <person name="Copeland A."/>
            <person name="Lucas S."/>
            <person name="Lapidus A."/>
            <person name="Barry K."/>
            <person name="Detter J.C."/>
            <person name="Glavina del Rio T."/>
            <person name="Hammon N."/>
            <person name="Israni S."/>
            <person name="Dalin E."/>
            <person name="Tice H."/>
            <person name="Pitluck S."/>
            <person name="Brettin T."/>
            <person name="Bruce D."/>
            <person name="Han C."/>
            <person name="Tapia R."/>
            <person name="Goodwin L."/>
            <person name="Thompson L.S."/>
            <person name="Gilna P."/>
            <person name="Schmutz J."/>
            <person name="Larimer F."/>
            <person name="Land M."/>
            <person name="Hauser L."/>
            <person name="Kyrpides N."/>
            <person name="Kim E."/>
            <person name="Belas R."/>
            <person name="Moran M.A."/>
            <person name="Buchan A."/>
            <person name="Gonzalez J.M."/>
            <person name="Schell M.A."/>
            <person name="Sun F."/>
            <person name="Richardson P."/>
        </authorList>
    </citation>
    <scope>NUCLEOTIDE SEQUENCE [LARGE SCALE GENOMIC DNA]</scope>
    <source>
        <strain>TM1040</strain>
    </source>
</reference>
<keyword id="KW-0963">Cytoplasm</keyword>
<keyword id="KW-0378">Hydrolase</keyword>
<keyword id="KW-0546">Nucleotide metabolism</keyword>
<keyword id="KW-1185">Reference proteome</keyword>
<gene>
    <name type="ordered locus">TM1040_2861</name>
</gene>
<comment type="function">
    <text evidence="1">Nucleoside triphosphate pyrophosphatase. May have a dual role in cell division arrest and in preventing the incorporation of modified nucleotides into cellular nucleic acids.</text>
</comment>
<comment type="catalytic activity">
    <reaction evidence="1">
        <text>a ribonucleoside 5'-triphosphate + H2O = a ribonucleoside 5'-phosphate + diphosphate + H(+)</text>
        <dbReference type="Rhea" id="RHEA:23996"/>
        <dbReference type="ChEBI" id="CHEBI:15377"/>
        <dbReference type="ChEBI" id="CHEBI:15378"/>
        <dbReference type="ChEBI" id="CHEBI:33019"/>
        <dbReference type="ChEBI" id="CHEBI:58043"/>
        <dbReference type="ChEBI" id="CHEBI:61557"/>
        <dbReference type="EC" id="3.6.1.9"/>
    </reaction>
</comment>
<comment type="catalytic activity">
    <reaction evidence="1">
        <text>a 2'-deoxyribonucleoside 5'-triphosphate + H2O = a 2'-deoxyribonucleoside 5'-phosphate + diphosphate + H(+)</text>
        <dbReference type="Rhea" id="RHEA:44644"/>
        <dbReference type="ChEBI" id="CHEBI:15377"/>
        <dbReference type="ChEBI" id="CHEBI:15378"/>
        <dbReference type="ChEBI" id="CHEBI:33019"/>
        <dbReference type="ChEBI" id="CHEBI:61560"/>
        <dbReference type="ChEBI" id="CHEBI:65317"/>
        <dbReference type="EC" id="3.6.1.9"/>
    </reaction>
</comment>
<comment type="cofactor">
    <cofactor evidence="1">
        <name>a divalent metal cation</name>
        <dbReference type="ChEBI" id="CHEBI:60240"/>
    </cofactor>
</comment>
<comment type="subcellular location">
    <subcellularLocation>
        <location evidence="1">Cytoplasm</location>
    </subcellularLocation>
</comment>
<comment type="similarity">
    <text evidence="1">Belongs to the Maf family.</text>
</comment>
<organism>
    <name type="scientific">Ruegeria sp. (strain TM1040)</name>
    <name type="common">Silicibacter sp.</name>
    <dbReference type="NCBI Taxonomy" id="292414"/>
    <lineage>
        <taxon>Bacteria</taxon>
        <taxon>Pseudomonadati</taxon>
        <taxon>Pseudomonadota</taxon>
        <taxon>Alphaproteobacteria</taxon>
        <taxon>Rhodobacterales</taxon>
        <taxon>Roseobacteraceae</taxon>
        <taxon>Ruegeria</taxon>
    </lineage>
</organism>
<sequence>MSTHILLASGSEIRAKLLRQAGVDFRVEVARVDEDAIKTALEADGASPRDIADTLAEAKARKVSGKFPEEMVLGCDQVLDFEGTLLSKPKDKNQALQQLKAMRGKRHMLLSAAVIYCDAKPLWRHVGQVRLVMRMASDAYLESYVERNWESIRHAVGAYKLEEEGVRLFTTIDGSYFNVLGLPMLELMNYLGLQGIIEQ</sequence>
<feature type="chain" id="PRO_0000267438" description="Nucleoside triphosphate pyrophosphatase">
    <location>
        <begin position="1"/>
        <end position="199"/>
    </location>
</feature>
<feature type="active site" description="Proton acceptor" evidence="1">
    <location>
        <position position="76"/>
    </location>
</feature>
<name>NTPP_RUEST</name>
<accession>Q1GCM3</accession>
<protein>
    <recommendedName>
        <fullName evidence="1">Nucleoside triphosphate pyrophosphatase</fullName>
        <ecNumber evidence="1">3.6.1.9</ecNumber>
    </recommendedName>
    <alternativeName>
        <fullName evidence="1">Nucleotide pyrophosphatase</fullName>
        <shortName evidence="1">Nucleotide PPase</shortName>
    </alternativeName>
</protein>